<protein>
    <recommendedName>
        <fullName>Vegetative protein 16</fullName>
        <shortName>VEG16</shortName>
    </recommendedName>
</protein>
<accession>P80867</accession>
<reference key="1">
    <citation type="journal article" date="1997" name="Electrophoresis">
        <title>First steps from a two-dimensional protein index towards a response-regulation map for Bacillus subtilis.</title>
        <authorList>
            <person name="Antelmann H."/>
            <person name="Bernhardt J."/>
            <person name="Schmid R."/>
            <person name="Mach H."/>
            <person name="Voelker U."/>
            <person name="Hecker M."/>
        </authorList>
    </citation>
    <scope>PROTEIN SEQUENCE</scope>
    <source>
        <strain>168 / IS58</strain>
    </source>
</reference>
<keyword id="KW-0903">Direct protein sequencing</keyword>
<organism>
    <name type="scientific">Bacillus subtilis</name>
    <dbReference type="NCBI Taxonomy" id="1423"/>
    <lineage>
        <taxon>Bacteria</taxon>
        <taxon>Bacillati</taxon>
        <taxon>Bacillota</taxon>
        <taxon>Bacilli</taxon>
        <taxon>Bacillales</taxon>
        <taxon>Bacillaceae</taxon>
        <taxon>Bacillus</taxon>
    </lineage>
</organism>
<name>VG16_BACIU</name>
<sequence>MDTIEPVSVAXIS</sequence>
<feature type="chain" id="PRO_0000050085" description="Vegetative protein 16">
    <location>
        <begin position="1"/>
        <end position="13" status="greater than"/>
    </location>
</feature>
<feature type="non-terminal residue">
    <location>
        <position position="13"/>
    </location>
</feature>
<proteinExistence type="evidence at protein level"/>